<proteinExistence type="evidence at transcript level"/>
<sequence>MAKNVAIFGLLFSLLLLVPSQIFAEESSTDAKEFVLTLDNTNFHDTVKKHDFIVVEFYAPWCGHCKKLAPEYEKAASILSTHEPPVVLAKVDANEEHNKDLASENDVKGFPTIKIFRNGGKNIQEYKGPREAEGIVEYLKKQSGPASTEIKSADDATAFVGDNKVVIVGVFPKFSGEEYDNFIALAEKLRSDYDFAHTLNAKHLPKGDSSVSGPVVRLFKPFDELFVDSKDFNVEALEKFIEESSTPIVTVFNNEPSNHPFVVKFFNSPNAKAMLFINFTTEGAESFKTKYHEVAEQYKQQGVSFLVGDVESSQGAFQYFGLKEEQVPLIIIQHNDGKKFFKPNLELDQLPTWLKAYKDGKVEPFVKSEPIPETNNEPVKVVVGQTLEDVVFKSGKNVLIEFYAPWCGHCKQLAPILDEVAVSFQSDADVVIAKLDATANDIPTDTFDVQGYPTLYFRSASGKLSQYDGGRTKEDIIEFIEKNKDKTGAAHQEVEQPKAAAQPEAEQPKDEL</sequence>
<reference key="1">
    <citation type="journal article" date="1992" name="Plant Mol. Biol.">
        <title>Sequence analysis and developmental expression of an alfalfa protein disulfide isomerase.</title>
        <authorList>
            <person name="Shorrosh B.S."/>
            <person name="Dixon R.A."/>
        </authorList>
    </citation>
    <scope>NUCLEOTIDE SEQUENCE [MRNA]</scope>
    <source>
        <strain>cv. Apollo</strain>
    </source>
</reference>
<reference key="2">
    <citation type="journal article" date="1991" name="Proc. Natl. Acad. Sci. U.S.A.">
        <title>Molecular cloning of a putative plant endomembrane protein resembling vertebrate protein disulfide-isomerase and a phosphatidylinositol-specific phospholipase C.</title>
        <authorList>
            <person name="Shorrosh B.S."/>
            <person name="Dixon R.A."/>
        </authorList>
    </citation>
    <scope>NUCLEOTIDE SEQUENCE [MRNA]</scope>
</reference>
<name>PDI_MEDSA</name>
<dbReference type="EC" id="5.3.4.1"/>
<dbReference type="EMBL" id="Z11499">
    <property type="protein sequence ID" value="CAA77575.1"/>
    <property type="molecule type" value="mRNA"/>
</dbReference>
<dbReference type="EMBL" id="M82973">
    <property type="protein sequence ID" value="AAA32662.1"/>
    <property type="molecule type" value="mRNA"/>
</dbReference>
<dbReference type="PIR" id="A41440">
    <property type="entry name" value="A41440"/>
</dbReference>
<dbReference type="PIR" id="S22479">
    <property type="entry name" value="ISAASS"/>
</dbReference>
<dbReference type="SMR" id="P29828"/>
<dbReference type="GlyCosmos" id="P29828">
    <property type="glycosylation" value="1 site, No reported glycans"/>
</dbReference>
<dbReference type="GO" id="GO:0005788">
    <property type="term" value="C:endoplasmic reticulum lumen"/>
    <property type="evidence" value="ECO:0007669"/>
    <property type="project" value="UniProtKB-SubCell"/>
</dbReference>
<dbReference type="GO" id="GO:0003756">
    <property type="term" value="F:protein disulfide isomerase activity"/>
    <property type="evidence" value="ECO:0007669"/>
    <property type="project" value="UniProtKB-EC"/>
</dbReference>
<dbReference type="GO" id="GO:0006457">
    <property type="term" value="P:protein folding"/>
    <property type="evidence" value="ECO:0007669"/>
    <property type="project" value="TreeGrafter"/>
</dbReference>
<dbReference type="GO" id="GO:0034976">
    <property type="term" value="P:response to endoplasmic reticulum stress"/>
    <property type="evidence" value="ECO:0007669"/>
    <property type="project" value="TreeGrafter"/>
</dbReference>
<dbReference type="CDD" id="cd02961">
    <property type="entry name" value="PDI_a_family"/>
    <property type="match status" value="1"/>
</dbReference>
<dbReference type="CDD" id="cd02995">
    <property type="entry name" value="PDI_a_PDI_a'_C"/>
    <property type="match status" value="1"/>
</dbReference>
<dbReference type="CDD" id="cd02982">
    <property type="entry name" value="PDI_b'_family"/>
    <property type="match status" value="1"/>
</dbReference>
<dbReference type="CDD" id="cd02981">
    <property type="entry name" value="PDI_b_family"/>
    <property type="match status" value="1"/>
</dbReference>
<dbReference type="FunFam" id="3.40.30.10:FF:000143">
    <property type="entry name" value="Protein disulfide-isomerase"/>
    <property type="match status" value="1"/>
</dbReference>
<dbReference type="FunFam" id="3.40.30.10:FF:000150">
    <property type="entry name" value="Protein disulfide-isomerase"/>
    <property type="match status" value="1"/>
</dbReference>
<dbReference type="FunFam" id="3.40.30.10:FF:000152">
    <property type="entry name" value="Protein disulfide-isomerase"/>
    <property type="match status" value="1"/>
</dbReference>
<dbReference type="FunFam" id="3.40.30.10:FF:000184">
    <property type="entry name" value="Protein disulfide-isomerase"/>
    <property type="match status" value="1"/>
</dbReference>
<dbReference type="Gene3D" id="3.40.30.10">
    <property type="entry name" value="Glutaredoxin"/>
    <property type="match status" value="4"/>
</dbReference>
<dbReference type="InterPro" id="IPR005788">
    <property type="entry name" value="PDI_thioredoxin-like_dom"/>
</dbReference>
<dbReference type="InterPro" id="IPR005792">
    <property type="entry name" value="Prot_disulphide_isomerase"/>
</dbReference>
<dbReference type="InterPro" id="IPR036249">
    <property type="entry name" value="Thioredoxin-like_sf"/>
</dbReference>
<dbReference type="InterPro" id="IPR017937">
    <property type="entry name" value="Thioredoxin_CS"/>
</dbReference>
<dbReference type="InterPro" id="IPR013766">
    <property type="entry name" value="Thioredoxin_domain"/>
</dbReference>
<dbReference type="NCBIfam" id="TIGR01130">
    <property type="entry name" value="ER_PDI_fam"/>
    <property type="match status" value="1"/>
</dbReference>
<dbReference type="NCBIfam" id="TIGR01126">
    <property type="entry name" value="pdi_dom"/>
    <property type="match status" value="2"/>
</dbReference>
<dbReference type="PANTHER" id="PTHR18929">
    <property type="entry name" value="PROTEIN DISULFIDE ISOMERASE"/>
    <property type="match status" value="1"/>
</dbReference>
<dbReference type="PANTHER" id="PTHR18929:SF132">
    <property type="entry name" value="PROTEIN DISULFIDE-ISOMERASE A3"/>
    <property type="match status" value="1"/>
</dbReference>
<dbReference type="Pfam" id="PF00085">
    <property type="entry name" value="Thioredoxin"/>
    <property type="match status" value="2"/>
</dbReference>
<dbReference type="Pfam" id="PF13848">
    <property type="entry name" value="Thioredoxin_6"/>
    <property type="match status" value="1"/>
</dbReference>
<dbReference type="PRINTS" id="PR00421">
    <property type="entry name" value="THIOREDOXIN"/>
</dbReference>
<dbReference type="SUPFAM" id="SSF52833">
    <property type="entry name" value="Thioredoxin-like"/>
    <property type="match status" value="4"/>
</dbReference>
<dbReference type="PROSITE" id="PS00014">
    <property type="entry name" value="ER_TARGET"/>
    <property type="match status" value="1"/>
</dbReference>
<dbReference type="PROSITE" id="PS00194">
    <property type="entry name" value="THIOREDOXIN_1"/>
    <property type="match status" value="2"/>
</dbReference>
<dbReference type="PROSITE" id="PS51352">
    <property type="entry name" value="THIOREDOXIN_2"/>
    <property type="match status" value="2"/>
</dbReference>
<organism>
    <name type="scientific">Medicago sativa</name>
    <name type="common">Alfalfa</name>
    <dbReference type="NCBI Taxonomy" id="3879"/>
    <lineage>
        <taxon>Eukaryota</taxon>
        <taxon>Viridiplantae</taxon>
        <taxon>Streptophyta</taxon>
        <taxon>Embryophyta</taxon>
        <taxon>Tracheophyta</taxon>
        <taxon>Spermatophyta</taxon>
        <taxon>Magnoliopsida</taxon>
        <taxon>eudicotyledons</taxon>
        <taxon>Gunneridae</taxon>
        <taxon>Pentapetalae</taxon>
        <taxon>rosids</taxon>
        <taxon>fabids</taxon>
        <taxon>Fabales</taxon>
        <taxon>Fabaceae</taxon>
        <taxon>Papilionoideae</taxon>
        <taxon>50 kb inversion clade</taxon>
        <taxon>NPAAA clade</taxon>
        <taxon>Hologalegina</taxon>
        <taxon>IRL clade</taxon>
        <taxon>Trifolieae</taxon>
        <taxon>Medicago</taxon>
    </lineage>
</organism>
<evidence type="ECO:0000250" key="1"/>
<evidence type="ECO:0000255" key="2"/>
<evidence type="ECO:0000255" key="3">
    <source>
        <dbReference type="PROSITE-ProRule" id="PRU00691"/>
    </source>
</evidence>
<evidence type="ECO:0000255" key="4">
    <source>
        <dbReference type="PROSITE-ProRule" id="PRU10138"/>
    </source>
</evidence>
<evidence type="ECO:0000256" key="5">
    <source>
        <dbReference type="SAM" id="MobiDB-lite"/>
    </source>
</evidence>
<evidence type="ECO:0000305" key="6"/>
<gene>
    <name type="primary">PDI</name>
</gene>
<feature type="signal peptide" evidence="1">
    <location>
        <begin position="1"/>
        <end position="24"/>
    </location>
</feature>
<feature type="chain" id="PRO_0000034209" description="Protein disulfide-isomerase">
    <location>
        <begin position="25"/>
        <end position="512"/>
    </location>
</feature>
<feature type="domain" description="Thioredoxin 1" evidence="3">
    <location>
        <begin position="25"/>
        <end position="144"/>
    </location>
</feature>
<feature type="domain" description="Thioredoxin 2" evidence="3">
    <location>
        <begin position="357"/>
        <end position="485"/>
    </location>
</feature>
<feature type="region of interest" description="Disordered" evidence="5">
    <location>
        <begin position="487"/>
        <end position="512"/>
    </location>
</feature>
<feature type="short sequence motif" description="Prevents secretion from ER">
    <location>
        <begin position="509"/>
        <end position="512"/>
    </location>
</feature>
<feature type="compositionally biased region" description="Basic and acidic residues" evidence="5">
    <location>
        <begin position="487"/>
        <end position="496"/>
    </location>
</feature>
<feature type="active site" description="Nucleophile" evidence="1">
    <location>
        <position position="62"/>
    </location>
</feature>
<feature type="active site" description="Nucleophile" evidence="1">
    <location>
        <position position="65"/>
    </location>
</feature>
<feature type="active site" description="Nucleophile" evidence="1">
    <location>
        <position position="407"/>
    </location>
</feature>
<feature type="active site" description="Nucleophile" evidence="1">
    <location>
        <position position="410"/>
    </location>
</feature>
<feature type="site" description="Contributes to redox potential value" evidence="1">
    <location>
        <position position="63"/>
    </location>
</feature>
<feature type="site" description="Contributes to redox potential value" evidence="1">
    <location>
        <position position="64"/>
    </location>
</feature>
<feature type="site" description="Lowers pKa of C-terminal Cys of first active site" evidence="1">
    <location>
        <position position="130"/>
    </location>
</feature>
<feature type="site" description="Contributes to redox potential value" evidence="1">
    <location>
        <position position="408"/>
    </location>
</feature>
<feature type="site" description="Contributes to redox potential value" evidence="1">
    <location>
        <position position="409"/>
    </location>
</feature>
<feature type="site" description="Lowers pKa of C-terminal Cys of second active site" evidence="1">
    <location>
        <position position="471"/>
    </location>
</feature>
<feature type="glycosylation site" description="N-linked (GlcNAc...) asparagine" evidence="2">
    <location>
        <position position="278"/>
    </location>
</feature>
<feature type="disulfide bond" description="Redox-active" evidence="3">
    <location>
        <begin position="62"/>
        <end position="65"/>
    </location>
</feature>
<feature type="disulfide bond" description="Redox-active" evidence="3">
    <location>
        <begin position="407"/>
        <end position="410"/>
    </location>
</feature>
<feature type="sequence conflict" description="In Ref. 2; AAA32662." evidence="6" ref="2">
    <original>L</original>
    <variation>V</variation>
    <location>
        <position position="16"/>
    </location>
</feature>
<feature type="sequence conflict" description="In Ref. 2; AAA32662." evidence="6" ref="2">
    <original>G</original>
    <variation>A</variation>
    <location>
        <position position="395"/>
    </location>
</feature>
<feature type="sequence conflict" description="In Ref. 2; AAA32662." evidence="6" ref="2">
    <original>H</original>
    <variation>Q</variation>
    <location>
        <position position="491"/>
    </location>
</feature>
<accession>P29828</accession>
<comment type="function">
    <text evidence="1">Participates in the folding of proteins containing disulfide bonds, may be involved in glycosylation, prolyl hydroxylation and triglyceride transfer.</text>
</comment>
<comment type="catalytic activity">
    <reaction>
        <text>Catalyzes the rearrangement of -S-S- bonds in proteins.</text>
        <dbReference type="EC" id="5.3.4.1"/>
    </reaction>
</comment>
<comment type="subcellular location">
    <subcellularLocation>
        <location evidence="4">Endoplasmic reticulum lumen</location>
    </subcellularLocation>
</comment>
<comment type="similarity">
    <text evidence="6">Belongs to the protein disulfide isomerase family.</text>
</comment>
<keyword id="KW-1015">Disulfide bond</keyword>
<keyword id="KW-0256">Endoplasmic reticulum</keyword>
<keyword id="KW-0325">Glycoprotein</keyword>
<keyword id="KW-0413">Isomerase</keyword>
<keyword id="KW-0676">Redox-active center</keyword>
<keyword id="KW-0677">Repeat</keyword>
<keyword id="KW-0732">Signal</keyword>
<protein>
    <recommendedName>
        <fullName>Protein disulfide-isomerase</fullName>
        <shortName>PDI</shortName>
        <ecNumber>5.3.4.1</ecNumber>
    </recommendedName>
</protein>